<sequence length="192" mass="22092">MVYPIRLYGDPVLRRKARPVEDFSGIKRLAEDMLETMFEAKGVGLAAPQIGLSQRLFVAVEYADEPEGEEERPLRELVRRVYVVANPVITYREGLVEGTEGCLSLPGLYSEEVPRAERIRVEYQDEEGRGRVLELEGYMARVFQHEIDHLDGILFFERLPKPKREAFLEANRAELVRFQKEARALLKELSQG</sequence>
<name>DEF_THET2</name>
<proteinExistence type="inferred from homology"/>
<protein>
    <recommendedName>
        <fullName evidence="1">Peptide deformylase</fullName>
        <shortName evidence="1">PDF</shortName>
        <ecNumber evidence="1">3.5.1.88</ecNumber>
    </recommendedName>
    <alternativeName>
        <fullName evidence="1">Polypeptide deformylase</fullName>
    </alternativeName>
</protein>
<accession>Q72H33</accession>
<feature type="chain" id="PRO_0000301120" description="Peptide deformylase">
    <location>
        <begin position="1"/>
        <end position="192"/>
    </location>
</feature>
<feature type="active site" evidence="1">
    <location>
        <position position="146"/>
    </location>
</feature>
<feature type="binding site" evidence="1">
    <location>
        <position position="102"/>
    </location>
    <ligand>
        <name>Fe cation</name>
        <dbReference type="ChEBI" id="CHEBI:24875"/>
    </ligand>
</feature>
<feature type="binding site" evidence="1">
    <location>
        <position position="145"/>
    </location>
    <ligand>
        <name>Fe cation</name>
        <dbReference type="ChEBI" id="CHEBI:24875"/>
    </ligand>
</feature>
<feature type="binding site" evidence="1">
    <location>
        <position position="149"/>
    </location>
    <ligand>
        <name>Fe cation</name>
        <dbReference type="ChEBI" id="CHEBI:24875"/>
    </ligand>
</feature>
<reference key="1">
    <citation type="journal article" date="2004" name="Nat. Biotechnol.">
        <title>The genome sequence of the extreme thermophile Thermus thermophilus.</title>
        <authorList>
            <person name="Henne A."/>
            <person name="Brueggemann H."/>
            <person name="Raasch C."/>
            <person name="Wiezer A."/>
            <person name="Hartsch T."/>
            <person name="Liesegang H."/>
            <person name="Johann A."/>
            <person name="Lienard T."/>
            <person name="Gohl O."/>
            <person name="Martinez-Arias R."/>
            <person name="Jacobi C."/>
            <person name="Starkuviene V."/>
            <person name="Schlenczeck S."/>
            <person name="Dencker S."/>
            <person name="Huber R."/>
            <person name="Klenk H.-P."/>
            <person name="Kramer W."/>
            <person name="Merkl R."/>
            <person name="Gottschalk G."/>
            <person name="Fritz H.-J."/>
        </authorList>
    </citation>
    <scope>NUCLEOTIDE SEQUENCE [LARGE SCALE GENOMIC DNA]</scope>
    <source>
        <strain>ATCC BAA-163 / DSM 7039 / HB27</strain>
    </source>
</reference>
<dbReference type="EC" id="3.5.1.88" evidence="1"/>
<dbReference type="EMBL" id="AE017221">
    <property type="protein sequence ID" value="AAS82004.1"/>
    <property type="molecule type" value="Genomic_DNA"/>
</dbReference>
<dbReference type="RefSeq" id="WP_011174028.1">
    <property type="nucleotide sequence ID" value="NC_005835.1"/>
</dbReference>
<dbReference type="SMR" id="Q72H33"/>
<dbReference type="GeneID" id="3169711"/>
<dbReference type="KEGG" id="tth:TT_C1662"/>
<dbReference type="eggNOG" id="COG0242">
    <property type="taxonomic scope" value="Bacteria"/>
</dbReference>
<dbReference type="HOGENOM" id="CLU_061901_1_2_0"/>
<dbReference type="OrthoDB" id="9784988at2"/>
<dbReference type="Proteomes" id="UP000000592">
    <property type="component" value="Chromosome"/>
</dbReference>
<dbReference type="GO" id="GO:0046872">
    <property type="term" value="F:metal ion binding"/>
    <property type="evidence" value="ECO:0007669"/>
    <property type="project" value="UniProtKB-KW"/>
</dbReference>
<dbReference type="GO" id="GO:0042586">
    <property type="term" value="F:peptide deformylase activity"/>
    <property type="evidence" value="ECO:0007669"/>
    <property type="project" value="UniProtKB-UniRule"/>
</dbReference>
<dbReference type="GO" id="GO:0043686">
    <property type="term" value="P:co-translational protein modification"/>
    <property type="evidence" value="ECO:0007669"/>
    <property type="project" value="TreeGrafter"/>
</dbReference>
<dbReference type="GO" id="GO:0006412">
    <property type="term" value="P:translation"/>
    <property type="evidence" value="ECO:0007669"/>
    <property type="project" value="UniProtKB-UniRule"/>
</dbReference>
<dbReference type="CDD" id="cd00487">
    <property type="entry name" value="Pep_deformylase"/>
    <property type="match status" value="1"/>
</dbReference>
<dbReference type="Gene3D" id="3.90.45.10">
    <property type="entry name" value="Peptide deformylase"/>
    <property type="match status" value="1"/>
</dbReference>
<dbReference type="HAMAP" id="MF_00163">
    <property type="entry name" value="Pep_deformylase"/>
    <property type="match status" value="1"/>
</dbReference>
<dbReference type="InterPro" id="IPR023635">
    <property type="entry name" value="Peptide_deformylase"/>
</dbReference>
<dbReference type="InterPro" id="IPR036821">
    <property type="entry name" value="Peptide_deformylase_sf"/>
</dbReference>
<dbReference type="NCBIfam" id="TIGR00079">
    <property type="entry name" value="pept_deformyl"/>
    <property type="match status" value="1"/>
</dbReference>
<dbReference type="NCBIfam" id="NF001159">
    <property type="entry name" value="PRK00150.1-3"/>
    <property type="match status" value="1"/>
</dbReference>
<dbReference type="PANTHER" id="PTHR10458">
    <property type="entry name" value="PEPTIDE DEFORMYLASE"/>
    <property type="match status" value="1"/>
</dbReference>
<dbReference type="PANTHER" id="PTHR10458:SF22">
    <property type="entry name" value="PEPTIDE DEFORMYLASE"/>
    <property type="match status" value="1"/>
</dbReference>
<dbReference type="Pfam" id="PF01327">
    <property type="entry name" value="Pep_deformylase"/>
    <property type="match status" value="1"/>
</dbReference>
<dbReference type="PIRSF" id="PIRSF004749">
    <property type="entry name" value="Pep_def"/>
    <property type="match status" value="1"/>
</dbReference>
<dbReference type="PRINTS" id="PR01576">
    <property type="entry name" value="PDEFORMYLASE"/>
</dbReference>
<dbReference type="SUPFAM" id="SSF56420">
    <property type="entry name" value="Peptide deformylase"/>
    <property type="match status" value="1"/>
</dbReference>
<organism>
    <name type="scientific">Thermus thermophilus (strain ATCC BAA-163 / DSM 7039 / HB27)</name>
    <dbReference type="NCBI Taxonomy" id="262724"/>
    <lineage>
        <taxon>Bacteria</taxon>
        <taxon>Thermotogati</taxon>
        <taxon>Deinococcota</taxon>
        <taxon>Deinococci</taxon>
        <taxon>Thermales</taxon>
        <taxon>Thermaceae</taxon>
        <taxon>Thermus</taxon>
    </lineage>
</organism>
<gene>
    <name evidence="1" type="primary">def</name>
    <name type="ordered locus">TT_C1662</name>
</gene>
<comment type="function">
    <text evidence="1">Removes the formyl group from the N-terminal Met of newly synthesized proteins. Requires at least a dipeptide for an efficient rate of reaction. N-terminal L-methionine is a prerequisite for activity but the enzyme has broad specificity at other positions.</text>
</comment>
<comment type="catalytic activity">
    <reaction evidence="1">
        <text>N-terminal N-formyl-L-methionyl-[peptide] + H2O = N-terminal L-methionyl-[peptide] + formate</text>
        <dbReference type="Rhea" id="RHEA:24420"/>
        <dbReference type="Rhea" id="RHEA-COMP:10639"/>
        <dbReference type="Rhea" id="RHEA-COMP:10640"/>
        <dbReference type="ChEBI" id="CHEBI:15377"/>
        <dbReference type="ChEBI" id="CHEBI:15740"/>
        <dbReference type="ChEBI" id="CHEBI:49298"/>
        <dbReference type="ChEBI" id="CHEBI:64731"/>
        <dbReference type="EC" id="3.5.1.88"/>
    </reaction>
</comment>
<comment type="cofactor">
    <cofactor evidence="1">
        <name>Fe(2+)</name>
        <dbReference type="ChEBI" id="CHEBI:29033"/>
    </cofactor>
    <text evidence="1">Binds 1 Fe(2+) ion.</text>
</comment>
<comment type="similarity">
    <text evidence="1">Belongs to the polypeptide deformylase family.</text>
</comment>
<evidence type="ECO:0000255" key="1">
    <source>
        <dbReference type="HAMAP-Rule" id="MF_00163"/>
    </source>
</evidence>
<keyword id="KW-0378">Hydrolase</keyword>
<keyword id="KW-0408">Iron</keyword>
<keyword id="KW-0479">Metal-binding</keyword>
<keyword id="KW-0648">Protein biosynthesis</keyword>